<organism>
    <name type="scientific">Schizosaccharomyces pombe (strain 972 / ATCC 24843)</name>
    <name type="common">Fission yeast</name>
    <dbReference type="NCBI Taxonomy" id="284812"/>
    <lineage>
        <taxon>Eukaryota</taxon>
        <taxon>Fungi</taxon>
        <taxon>Dikarya</taxon>
        <taxon>Ascomycota</taxon>
        <taxon>Taphrinomycotina</taxon>
        <taxon>Schizosaccharomycetes</taxon>
        <taxon>Schizosaccharomycetales</taxon>
        <taxon>Schizosaccharomycetaceae</taxon>
        <taxon>Schizosaccharomyces</taxon>
    </lineage>
</organism>
<dbReference type="EMBL" id="CU329670">
    <property type="protein sequence ID" value="CAB57441.2"/>
    <property type="molecule type" value="Genomic_DNA"/>
</dbReference>
<dbReference type="EMBL" id="AB027840">
    <property type="protein sequence ID" value="BAA87144.1"/>
    <property type="status" value="ALT_INIT"/>
    <property type="molecule type" value="Genomic_DNA"/>
</dbReference>
<dbReference type="PIR" id="T41718">
    <property type="entry name" value="T41718"/>
</dbReference>
<dbReference type="RefSeq" id="NP_593160.2">
    <property type="nucleotide sequence ID" value="NM_001018558.2"/>
</dbReference>
<dbReference type="SMR" id="Q9UT46"/>
<dbReference type="BioGRID" id="280060">
    <property type="interactions" value="106"/>
</dbReference>
<dbReference type="FunCoup" id="Q9UT46">
    <property type="interactions" value="6"/>
</dbReference>
<dbReference type="IntAct" id="Q9UT46">
    <property type="interactions" value="40"/>
</dbReference>
<dbReference type="MINT" id="Q9UT46"/>
<dbReference type="STRING" id="284812.Q9UT46"/>
<dbReference type="iPTMnet" id="Q9UT46"/>
<dbReference type="SwissPalm" id="Q9UT46"/>
<dbReference type="PaxDb" id="4896-SPAC821.07c.1"/>
<dbReference type="EnsemblFungi" id="SPAC821.07c.1">
    <property type="protein sequence ID" value="SPAC821.07c.1:pep"/>
    <property type="gene ID" value="SPAC821.07c"/>
</dbReference>
<dbReference type="GeneID" id="2543646"/>
<dbReference type="KEGG" id="spo:2543646"/>
<dbReference type="PomBase" id="SPAC821.07c">
    <property type="gene designation" value="moc3"/>
</dbReference>
<dbReference type="VEuPathDB" id="FungiDB:SPAC821.07c"/>
<dbReference type="eggNOG" id="ENOG502SFTK">
    <property type="taxonomic scope" value="Eukaryota"/>
</dbReference>
<dbReference type="HOGENOM" id="CLU_536554_0_0_1"/>
<dbReference type="InParanoid" id="Q9UT46"/>
<dbReference type="OMA" id="CVGHAVT"/>
<dbReference type="PRO" id="PR:Q9UT46"/>
<dbReference type="Proteomes" id="UP000002485">
    <property type="component" value="Chromosome I"/>
</dbReference>
<dbReference type="GO" id="GO:0005634">
    <property type="term" value="C:nucleus"/>
    <property type="evidence" value="ECO:0000314"/>
    <property type="project" value="PomBase"/>
</dbReference>
<dbReference type="GO" id="GO:0000981">
    <property type="term" value="F:DNA-binding transcription factor activity, RNA polymerase II-specific"/>
    <property type="evidence" value="ECO:0000255"/>
    <property type="project" value="PomBase"/>
</dbReference>
<dbReference type="GO" id="GO:0000978">
    <property type="term" value="F:RNA polymerase II cis-regulatory region sequence-specific DNA binding"/>
    <property type="evidence" value="ECO:0000255"/>
    <property type="project" value="PomBase"/>
</dbReference>
<dbReference type="GO" id="GO:0008270">
    <property type="term" value="F:zinc ion binding"/>
    <property type="evidence" value="ECO:0000255"/>
    <property type="project" value="PomBase"/>
</dbReference>
<dbReference type="GO" id="GO:0031139">
    <property type="term" value="P:positive regulation of conjugation with cellular fusion"/>
    <property type="evidence" value="ECO:0000315"/>
    <property type="project" value="PomBase"/>
</dbReference>
<dbReference type="GO" id="GO:0006357">
    <property type="term" value="P:regulation of transcription by RNA polymerase II"/>
    <property type="evidence" value="ECO:0000318"/>
    <property type="project" value="GO_Central"/>
</dbReference>
<dbReference type="CDD" id="cd00067">
    <property type="entry name" value="GAL4"/>
    <property type="match status" value="1"/>
</dbReference>
<dbReference type="Gene3D" id="4.10.240.10">
    <property type="entry name" value="Zn(2)-C6 fungal-type DNA-binding domain"/>
    <property type="match status" value="1"/>
</dbReference>
<dbReference type="InterPro" id="IPR052360">
    <property type="entry name" value="Transcr_Regulatory_Proteins"/>
</dbReference>
<dbReference type="InterPro" id="IPR036864">
    <property type="entry name" value="Zn2-C6_fun-type_DNA-bd_sf"/>
</dbReference>
<dbReference type="InterPro" id="IPR001138">
    <property type="entry name" value="Zn2Cys6_DnaBD"/>
</dbReference>
<dbReference type="PANTHER" id="PTHR36206">
    <property type="entry name" value="ASPERCRYPTIN BIOSYNTHESIS CLUSTER-SPECIFIC TRANSCRIPTION REGULATOR ATNN-RELATED"/>
    <property type="match status" value="1"/>
</dbReference>
<dbReference type="PANTHER" id="PTHR36206:SF13">
    <property type="entry name" value="TRANSCRIPTIONAL REGULATORY PROTEIN MOC3"/>
    <property type="match status" value="1"/>
</dbReference>
<dbReference type="Pfam" id="PF00172">
    <property type="entry name" value="Zn_clus"/>
    <property type="match status" value="1"/>
</dbReference>
<dbReference type="SMART" id="SM00066">
    <property type="entry name" value="GAL4"/>
    <property type="match status" value="1"/>
</dbReference>
<dbReference type="SUPFAM" id="SSF57701">
    <property type="entry name" value="Zn2/Cys6 DNA-binding domain"/>
    <property type="match status" value="1"/>
</dbReference>
<dbReference type="PROSITE" id="PS00463">
    <property type="entry name" value="ZN2_CY6_FUNGAL_1"/>
    <property type="match status" value="1"/>
</dbReference>
<dbReference type="PROSITE" id="PS50048">
    <property type="entry name" value="ZN2_CY6_FUNGAL_2"/>
    <property type="match status" value="1"/>
</dbReference>
<accession>Q9UT46</accession>
<accession>Q9UU35</accession>
<feature type="chain" id="PRO_0000115010" description="Transcriptional regulatory protein moc3">
    <location>
        <begin position="1"/>
        <end position="508"/>
    </location>
</feature>
<feature type="DNA-binding region" description="Zn(2)-C6 fungal-type" evidence="1">
    <location>
        <begin position="46"/>
        <end position="76"/>
    </location>
</feature>
<feature type="region of interest" description="Disordered" evidence="2">
    <location>
        <begin position="15"/>
        <end position="43"/>
    </location>
</feature>
<feature type="region of interest" description="Disordered" evidence="2">
    <location>
        <begin position="110"/>
        <end position="146"/>
    </location>
</feature>
<feature type="region of interest" description="Disordered" evidence="2">
    <location>
        <begin position="174"/>
        <end position="193"/>
    </location>
</feature>
<feature type="compositionally biased region" description="Low complexity" evidence="2">
    <location>
        <begin position="176"/>
        <end position="193"/>
    </location>
</feature>
<sequence length="508" mass="56692">MNPYVSYPEIHMKRNRTGSINSNPLYIPNPNVEPTPKPTKRRTKTGCLTCRRRRIKCDETKPFCLNCTKTNRECEGYPNSAAQMQAMGSVSPPELSVHSAQQPLIPTSIASSSAQTGDTFSGSSQSNFNTNDLNQMTSSSNLSTVTPIKQDHQKPMNLQGFPSAYQQHQYLQSNHNVPTNNSSSATSSTKPSVQSVGQASYPFLSSVSNFPSNFNSELFPFYFHDVVPSICAFEFDNNIALHFWSVTVPQFAQSMPCIANSLMAFASIKKLDVFGAYSHLTRALRCPMPGPNSFEYLLVSAFLTLTQLNLPAYDLNFCNNFIRKLSWSSSTKSNYVSLLIAMVVRELVFAILPRGCIWGFNGKPLSEVSVSRSHAPVSDSLFTIGLDILSQPTLSDDLHRERMVAWRDEYHVHLYSASRSPLTKVIDCVGHAVTKNNNDVLSGLQQLMQEECTDIAVLRTSYLCVLSLQNVFASNSKEFKLRAQIESHFGRLMLEHFMDCNVLNRPVL</sequence>
<reference key="1">
    <citation type="journal article" date="2005" name="Curr. Genet.">
        <title>Moc3, a novel Zn finger type protein involved in sexual development, ascus formation, and stress response of Schizosaccharomyces pombe.</title>
        <authorList>
            <person name="Goldar M.M."/>
            <person name="Jeong H.T."/>
            <person name="Tanaka K."/>
            <person name="Matsuda H."/>
            <person name="Kawamukai M."/>
        </authorList>
    </citation>
    <scope>NUCLEOTIDE SEQUENCE [GENOMIC DNA]</scope>
    <scope>FUNCTION</scope>
    <scope>INTERACTION WITH ZFS1</scope>
    <scope>SUBCELLULAR LOCATION</scope>
</reference>
<reference key="2">
    <citation type="journal article" date="2002" name="Nature">
        <title>The genome sequence of Schizosaccharomyces pombe.</title>
        <authorList>
            <person name="Wood V."/>
            <person name="Gwilliam R."/>
            <person name="Rajandream M.A."/>
            <person name="Lyne M.H."/>
            <person name="Lyne R."/>
            <person name="Stewart A."/>
            <person name="Sgouros J.G."/>
            <person name="Peat N."/>
            <person name="Hayles J."/>
            <person name="Baker S.G."/>
            <person name="Basham D."/>
            <person name="Bowman S."/>
            <person name="Brooks K."/>
            <person name="Brown D."/>
            <person name="Brown S."/>
            <person name="Chillingworth T."/>
            <person name="Churcher C.M."/>
            <person name="Collins M."/>
            <person name="Connor R."/>
            <person name="Cronin A."/>
            <person name="Davis P."/>
            <person name="Feltwell T."/>
            <person name="Fraser A."/>
            <person name="Gentles S."/>
            <person name="Goble A."/>
            <person name="Hamlin N."/>
            <person name="Harris D.E."/>
            <person name="Hidalgo J."/>
            <person name="Hodgson G."/>
            <person name="Holroyd S."/>
            <person name="Hornsby T."/>
            <person name="Howarth S."/>
            <person name="Huckle E.J."/>
            <person name="Hunt S."/>
            <person name="Jagels K."/>
            <person name="James K.D."/>
            <person name="Jones L."/>
            <person name="Jones M."/>
            <person name="Leather S."/>
            <person name="McDonald S."/>
            <person name="McLean J."/>
            <person name="Mooney P."/>
            <person name="Moule S."/>
            <person name="Mungall K.L."/>
            <person name="Murphy L.D."/>
            <person name="Niblett D."/>
            <person name="Odell C."/>
            <person name="Oliver K."/>
            <person name="O'Neil S."/>
            <person name="Pearson D."/>
            <person name="Quail M.A."/>
            <person name="Rabbinowitsch E."/>
            <person name="Rutherford K.M."/>
            <person name="Rutter S."/>
            <person name="Saunders D."/>
            <person name="Seeger K."/>
            <person name="Sharp S."/>
            <person name="Skelton J."/>
            <person name="Simmonds M.N."/>
            <person name="Squares R."/>
            <person name="Squares S."/>
            <person name="Stevens K."/>
            <person name="Taylor K."/>
            <person name="Taylor R.G."/>
            <person name="Tivey A."/>
            <person name="Walsh S.V."/>
            <person name="Warren T."/>
            <person name="Whitehead S."/>
            <person name="Woodward J.R."/>
            <person name="Volckaert G."/>
            <person name="Aert R."/>
            <person name="Robben J."/>
            <person name="Grymonprez B."/>
            <person name="Weltjens I."/>
            <person name="Vanstreels E."/>
            <person name="Rieger M."/>
            <person name="Schaefer M."/>
            <person name="Mueller-Auer S."/>
            <person name="Gabel C."/>
            <person name="Fuchs M."/>
            <person name="Duesterhoeft A."/>
            <person name="Fritzc C."/>
            <person name="Holzer E."/>
            <person name="Moestl D."/>
            <person name="Hilbert H."/>
            <person name="Borzym K."/>
            <person name="Langer I."/>
            <person name="Beck A."/>
            <person name="Lehrach H."/>
            <person name="Reinhardt R."/>
            <person name="Pohl T.M."/>
            <person name="Eger P."/>
            <person name="Zimmermann W."/>
            <person name="Wedler H."/>
            <person name="Wambutt R."/>
            <person name="Purnelle B."/>
            <person name="Goffeau A."/>
            <person name="Cadieu E."/>
            <person name="Dreano S."/>
            <person name="Gloux S."/>
            <person name="Lelaure V."/>
            <person name="Mottier S."/>
            <person name="Galibert F."/>
            <person name="Aves S.J."/>
            <person name="Xiang Z."/>
            <person name="Hunt C."/>
            <person name="Moore K."/>
            <person name="Hurst S.M."/>
            <person name="Lucas M."/>
            <person name="Rochet M."/>
            <person name="Gaillardin C."/>
            <person name="Tallada V.A."/>
            <person name="Garzon A."/>
            <person name="Thode G."/>
            <person name="Daga R.R."/>
            <person name="Cruzado L."/>
            <person name="Jimenez J."/>
            <person name="Sanchez M."/>
            <person name="del Rey F."/>
            <person name="Benito J."/>
            <person name="Dominguez A."/>
            <person name="Revuelta J.L."/>
            <person name="Moreno S."/>
            <person name="Armstrong J."/>
            <person name="Forsburg S.L."/>
            <person name="Cerutti L."/>
            <person name="Lowe T."/>
            <person name="McCombie W.R."/>
            <person name="Paulsen I."/>
            <person name="Potashkin J."/>
            <person name="Shpakovski G.V."/>
            <person name="Ussery D."/>
            <person name="Barrell B.G."/>
            <person name="Nurse P."/>
        </authorList>
    </citation>
    <scope>NUCLEOTIDE SEQUENCE [LARGE SCALE GENOMIC DNA]</scope>
    <source>
        <strain>972 / ATCC 24843</strain>
    </source>
</reference>
<reference key="3">
    <citation type="journal article" date="2011" name="Science">
        <title>Comparative functional genomics of the fission yeasts.</title>
        <authorList>
            <person name="Rhind N."/>
            <person name="Chen Z."/>
            <person name="Yassour M."/>
            <person name="Thompson D.A."/>
            <person name="Haas B.J."/>
            <person name="Habib N."/>
            <person name="Wapinski I."/>
            <person name="Roy S."/>
            <person name="Lin M.F."/>
            <person name="Heiman D.I."/>
            <person name="Young S.K."/>
            <person name="Furuya K."/>
            <person name="Guo Y."/>
            <person name="Pidoux A."/>
            <person name="Chen H.M."/>
            <person name="Robbertse B."/>
            <person name="Goldberg J.M."/>
            <person name="Aoki K."/>
            <person name="Bayne E.H."/>
            <person name="Berlin A.M."/>
            <person name="Desjardins C.A."/>
            <person name="Dobbs E."/>
            <person name="Dukaj L."/>
            <person name="Fan L."/>
            <person name="FitzGerald M.G."/>
            <person name="French C."/>
            <person name="Gujja S."/>
            <person name="Hansen K."/>
            <person name="Keifenheim D."/>
            <person name="Levin J.Z."/>
            <person name="Mosher R.A."/>
            <person name="Mueller C.A."/>
            <person name="Pfiffner J."/>
            <person name="Priest M."/>
            <person name="Russ C."/>
            <person name="Smialowska A."/>
            <person name="Swoboda P."/>
            <person name="Sykes S.M."/>
            <person name="Vaughn M."/>
            <person name="Vengrova S."/>
            <person name="Yoder R."/>
            <person name="Zeng Q."/>
            <person name="Allshire R."/>
            <person name="Baulcombe D."/>
            <person name="Birren B.W."/>
            <person name="Brown W."/>
            <person name="Ekwall K."/>
            <person name="Kellis M."/>
            <person name="Leatherwood J."/>
            <person name="Levin H."/>
            <person name="Margalit H."/>
            <person name="Martienssen R."/>
            <person name="Nieduszynski C.A."/>
            <person name="Spatafora J.W."/>
            <person name="Friedman N."/>
            <person name="Dalgaard J.Z."/>
            <person name="Baumann P."/>
            <person name="Niki H."/>
            <person name="Regev A."/>
            <person name="Nusbaum C."/>
        </authorList>
    </citation>
    <scope>REVISION OF GENE MODEL</scope>
</reference>
<reference key="4">
    <citation type="journal article" date="2000" name="Genes Cells">
        <title>Large-scale screening of intracellular protein localization in living fission yeast cells by the use of a GFP-fusion genomic DNA library.</title>
        <authorList>
            <person name="Ding D.-Q."/>
            <person name="Tomita Y."/>
            <person name="Yamamoto A."/>
            <person name="Chikashige Y."/>
            <person name="Haraguchi T."/>
            <person name="Hiraoka Y."/>
        </authorList>
    </citation>
    <scope>NUCLEOTIDE SEQUENCE [LARGE SCALE GENOMIC DNA] OF 1-55</scope>
    <scope>SUBCELLULAR LOCATION</scope>
    <source>
        <strain>ATCC 38364 / 968</strain>
    </source>
</reference>
<reference key="5">
    <citation type="journal article" date="2006" name="Nat. Biotechnol.">
        <title>ORFeome cloning and global analysis of protein localization in the fission yeast Schizosaccharomyces pombe.</title>
        <authorList>
            <person name="Matsuyama A."/>
            <person name="Arai R."/>
            <person name="Yashiroda Y."/>
            <person name="Shirai A."/>
            <person name="Kamata A."/>
            <person name="Sekido S."/>
            <person name="Kobayashi Y."/>
            <person name="Hashimoto A."/>
            <person name="Hamamoto M."/>
            <person name="Hiraoka Y."/>
            <person name="Horinouchi S."/>
            <person name="Yoshida M."/>
        </authorList>
    </citation>
    <scope>SUBCELLULAR LOCATION [LARGE SCALE ANALYSIS]</scope>
</reference>
<protein>
    <recommendedName>
        <fullName>Transcriptional regulatory protein moc3</fullName>
    </recommendedName>
    <alternativeName>
        <fullName>Multicopy suppressor of overexpressed cyr1 protein 3</fullName>
    </alternativeName>
</protein>
<name>MOC3_SCHPO</name>
<proteinExistence type="evidence at protein level"/>
<gene>
    <name type="primary">moc3</name>
    <name type="ORF">SPAC821.07c</name>
</gene>
<keyword id="KW-0238">DNA-binding</keyword>
<keyword id="KW-0479">Metal-binding</keyword>
<keyword id="KW-0539">Nucleus</keyword>
<keyword id="KW-1185">Reference proteome</keyword>
<keyword id="KW-0804">Transcription</keyword>
<keyword id="KW-0805">Transcription regulation</keyword>
<keyword id="KW-0862">Zinc</keyword>
<evidence type="ECO:0000255" key="1">
    <source>
        <dbReference type="PROSITE-ProRule" id="PRU00227"/>
    </source>
</evidence>
<evidence type="ECO:0000256" key="2">
    <source>
        <dbReference type="SAM" id="MobiDB-lite"/>
    </source>
</evidence>
<evidence type="ECO:0000269" key="3">
    <source>
    </source>
</evidence>
<evidence type="ECO:0000269" key="4">
    <source>
    </source>
</evidence>
<evidence type="ECO:0000269" key="5">
    <source>
    </source>
</evidence>
<evidence type="ECO:0000305" key="6"/>
<comment type="function">
    <text evidence="4">Induces sexual development and ascus formation. Also involved in calcium homeostasis.</text>
</comment>
<comment type="subunit">
    <text evidence="4">Interacts with zfs1.</text>
</comment>
<comment type="subcellular location">
    <subcellularLocation>
        <location evidence="1 3 4 5">Nucleus</location>
    </subcellularLocation>
</comment>
<comment type="sequence caution" evidence="6">
    <conflict type="erroneous initiation">
        <sequence resource="EMBL-CDS" id="BAA87144"/>
    </conflict>
    <text>Extended N-terminus.</text>
</comment>